<feature type="chain" id="PRO_0000368533" description="ATP synthase subunit b">
    <location>
        <begin position="1"/>
        <end position="188"/>
    </location>
</feature>
<feature type="transmembrane region" description="Helical" evidence="1">
    <location>
        <begin position="21"/>
        <end position="41"/>
    </location>
</feature>
<protein>
    <recommendedName>
        <fullName evidence="1">ATP synthase subunit b</fullName>
    </recommendedName>
    <alternativeName>
        <fullName evidence="1">ATP synthase F(0) sector subunit b</fullName>
    </alternativeName>
    <alternativeName>
        <fullName evidence="1">ATPase subunit I</fullName>
    </alternativeName>
    <alternativeName>
        <fullName evidence="1">F-type ATPase subunit b</fullName>
        <shortName evidence="1">F-ATPase subunit b</shortName>
    </alternativeName>
</protein>
<organism>
    <name type="scientific">Kineococcus radiotolerans (strain ATCC BAA-149 / DSM 14245 / SRS30216)</name>
    <dbReference type="NCBI Taxonomy" id="266940"/>
    <lineage>
        <taxon>Bacteria</taxon>
        <taxon>Bacillati</taxon>
        <taxon>Actinomycetota</taxon>
        <taxon>Actinomycetes</taxon>
        <taxon>Kineosporiales</taxon>
        <taxon>Kineosporiaceae</taxon>
        <taxon>Kineococcus</taxon>
    </lineage>
</organism>
<accession>A6W7G5</accession>
<sequence length="188" mass="20370">MLVAAFAAAGEEVEGNPTYPILPHLGELIVGIIFAIIIYAVIAKKVVPRLEAMYEERRAAIEGNVEKAEKAQAEAQVALEQYKAQLADARGEANRIREEARQQGAQILAEMREQAQAESERITTAARATIEAERVQATAQLRAEVGRLATDLAGRIVGESLQDSARQSGVVDRFLADLERSESGASSR</sequence>
<evidence type="ECO:0000255" key="1">
    <source>
        <dbReference type="HAMAP-Rule" id="MF_01398"/>
    </source>
</evidence>
<gene>
    <name evidence="1" type="primary">atpF</name>
    <name type="ordered locus">Krad_1266</name>
</gene>
<dbReference type="EMBL" id="CP000750">
    <property type="protein sequence ID" value="ABS02754.1"/>
    <property type="molecule type" value="Genomic_DNA"/>
</dbReference>
<dbReference type="RefSeq" id="WP_012084390.1">
    <property type="nucleotide sequence ID" value="NC_009664.2"/>
</dbReference>
<dbReference type="SMR" id="A6W7G5"/>
<dbReference type="STRING" id="266940.Krad_1266"/>
<dbReference type="KEGG" id="kra:Krad_1266"/>
<dbReference type="eggNOG" id="COG0711">
    <property type="taxonomic scope" value="Bacteria"/>
</dbReference>
<dbReference type="HOGENOM" id="CLU_079215_5_1_11"/>
<dbReference type="OrthoDB" id="5243563at2"/>
<dbReference type="Proteomes" id="UP000001116">
    <property type="component" value="Chromosome"/>
</dbReference>
<dbReference type="GO" id="GO:0005886">
    <property type="term" value="C:plasma membrane"/>
    <property type="evidence" value="ECO:0007669"/>
    <property type="project" value="UniProtKB-SubCell"/>
</dbReference>
<dbReference type="GO" id="GO:0045259">
    <property type="term" value="C:proton-transporting ATP synthase complex"/>
    <property type="evidence" value="ECO:0007669"/>
    <property type="project" value="UniProtKB-KW"/>
</dbReference>
<dbReference type="GO" id="GO:0046933">
    <property type="term" value="F:proton-transporting ATP synthase activity, rotational mechanism"/>
    <property type="evidence" value="ECO:0007669"/>
    <property type="project" value="UniProtKB-UniRule"/>
</dbReference>
<dbReference type="GO" id="GO:0046961">
    <property type="term" value="F:proton-transporting ATPase activity, rotational mechanism"/>
    <property type="evidence" value="ECO:0007669"/>
    <property type="project" value="TreeGrafter"/>
</dbReference>
<dbReference type="CDD" id="cd06503">
    <property type="entry name" value="ATP-synt_Fo_b"/>
    <property type="match status" value="1"/>
</dbReference>
<dbReference type="Gene3D" id="1.20.5.620">
    <property type="entry name" value="F1F0 ATP synthase subunit B, membrane domain"/>
    <property type="match status" value="1"/>
</dbReference>
<dbReference type="HAMAP" id="MF_01398">
    <property type="entry name" value="ATP_synth_b_bprime"/>
    <property type="match status" value="1"/>
</dbReference>
<dbReference type="InterPro" id="IPR028987">
    <property type="entry name" value="ATP_synth_B-like_membr_sf"/>
</dbReference>
<dbReference type="InterPro" id="IPR002146">
    <property type="entry name" value="ATP_synth_b/b'su_bac/chlpt"/>
</dbReference>
<dbReference type="InterPro" id="IPR005864">
    <property type="entry name" value="ATP_synth_F0_bsu_bac"/>
</dbReference>
<dbReference type="InterPro" id="IPR050059">
    <property type="entry name" value="ATP_synthase_B_chain"/>
</dbReference>
<dbReference type="NCBIfam" id="TIGR01144">
    <property type="entry name" value="ATP_synt_b"/>
    <property type="match status" value="1"/>
</dbReference>
<dbReference type="NCBIfam" id="NF004412">
    <property type="entry name" value="PRK05759.1-3"/>
    <property type="match status" value="1"/>
</dbReference>
<dbReference type="PANTHER" id="PTHR33445:SF1">
    <property type="entry name" value="ATP SYNTHASE SUBUNIT B"/>
    <property type="match status" value="1"/>
</dbReference>
<dbReference type="PANTHER" id="PTHR33445">
    <property type="entry name" value="ATP SYNTHASE SUBUNIT B', CHLOROPLASTIC"/>
    <property type="match status" value="1"/>
</dbReference>
<dbReference type="Pfam" id="PF00430">
    <property type="entry name" value="ATP-synt_B"/>
    <property type="match status" value="1"/>
</dbReference>
<dbReference type="SUPFAM" id="SSF81573">
    <property type="entry name" value="F1F0 ATP synthase subunit B, membrane domain"/>
    <property type="match status" value="1"/>
</dbReference>
<name>ATPF_KINRD</name>
<reference key="1">
    <citation type="journal article" date="2008" name="PLoS ONE">
        <title>Survival in nuclear waste, extreme resistance, and potential applications gleaned from the genome sequence of Kineococcus radiotolerans SRS30216.</title>
        <authorList>
            <person name="Bagwell C.E."/>
            <person name="Bhat S."/>
            <person name="Hawkins G.M."/>
            <person name="Smith B.W."/>
            <person name="Biswas T."/>
            <person name="Hoover T.R."/>
            <person name="Saunders E."/>
            <person name="Han C.S."/>
            <person name="Tsodikov O.V."/>
            <person name="Shimkets L.J."/>
        </authorList>
    </citation>
    <scope>NUCLEOTIDE SEQUENCE [LARGE SCALE GENOMIC DNA]</scope>
    <source>
        <strain>ATCC BAA-149 / DSM 14245 / SRS30216</strain>
    </source>
</reference>
<keyword id="KW-0066">ATP synthesis</keyword>
<keyword id="KW-1003">Cell membrane</keyword>
<keyword id="KW-0138">CF(0)</keyword>
<keyword id="KW-0375">Hydrogen ion transport</keyword>
<keyword id="KW-0406">Ion transport</keyword>
<keyword id="KW-0472">Membrane</keyword>
<keyword id="KW-1185">Reference proteome</keyword>
<keyword id="KW-0812">Transmembrane</keyword>
<keyword id="KW-1133">Transmembrane helix</keyword>
<keyword id="KW-0813">Transport</keyword>
<comment type="function">
    <text evidence="1">F(1)F(0) ATP synthase produces ATP from ADP in the presence of a proton or sodium gradient. F-type ATPases consist of two structural domains, F(1) containing the extramembraneous catalytic core and F(0) containing the membrane proton channel, linked together by a central stalk and a peripheral stalk. During catalysis, ATP synthesis in the catalytic domain of F(1) is coupled via a rotary mechanism of the central stalk subunits to proton translocation.</text>
</comment>
<comment type="function">
    <text evidence="1">Component of the F(0) channel, it forms part of the peripheral stalk, linking F(1) to F(0).</text>
</comment>
<comment type="subunit">
    <text evidence="1">F-type ATPases have 2 components, F(1) - the catalytic core - and F(0) - the membrane proton channel. F(1) has five subunits: alpha(3), beta(3), gamma(1), delta(1), epsilon(1). F(0) has three main subunits: a(1), b(2) and c(10-14). The alpha and beta chains form an alternating ring which encloses part of the gamma chain. F(1) is attached to F(0) by a central stalk formed by the gamma and epsilon chains, while a peripheral stalk is formed by the delta and b chains.</text>
</comment>
<comment type="subcellular location">
    <subcellularLocation>
        <location evidence="1">Cell membrane</location>
        <topology evidence="1">Single-pass membrane protein</topology>
    </subcellularLocation>
</comment>
<comment type="similarity">
    <text evidence="1">Belongs to the ATPase B chain family.</text>
</comment>
<proteinExistence type="inferred from homology"/>